<gene>
    <name type="primary">ERG13</name>
    <name type="ORF">MYCGRDRAFT_54740</name>
</gene>
<comment type="function">
    <text evidence="2 3 4 5 10">Hydroxymethylglutaryl-CoA synthase involved in the biosynthesis of a ferrichrome A-like siderophors which may contribute to organismal virulence (Probable). The first step of siderophore biosynthesis is performed by the HMG-CoA synthase (HMGS) MYCGRDRAFT_54740 which catalyzes the generation of HMG-CoA and CoA using acetoacetyl-CoA and acetyl-CoA as substrates (By similarity). The enoyl-CoA isomerase/hydratase MYCGRDRAFT_76805 then catalyzes the conversion of HMG-CoA to methylglutaconyl-CoA (By similarity). The acyltransferase MYCGRDRAFT_85486 then fuses methylglutaconyl-CoA with hydroxyornithine to yield methylglutaconyl hydroxyornithine (By similarity). Methylglutaconyl hydroxyornithine is then available for use by the nonribosomal peptide synthetase NRPS2 to generate the ferrichrome A-like siderophore (By similarity).</text>
</comment>
<comment type="catalytic activity">
    <reaction evidence="2">
        <text>acetoacetyl-CoA + acetyl-CoA + H2O = (3S)-3-hydroxy-3-methylglutaryl-CoA + CoA + H(+)</text>
        <dbReference type="Rhea" id="RHEA:10188"/>
        <dbReference type="ChEBI" id="CHEBI:15377"/>
        <dbReference type="ChEBI" id="CHEBI:15378"/>
        <dbReference type="ChEBI" id="CHEBI:43074"/>
        <dbReference type="ChEBI" id="CHEBI:57286"/>
        <dbReference type="ChEBI" id="CHEBI:57287"/>
        <dbReference type="ChEBI" id="CHEBI:57288"/>
        <dbReference type="EC" id="2.3.3.10"/>
    </reaction>
    <physiologicalReaction direction="left-to-right" evidence="2">
        <dbReference type="Rhea" id="RHEA:10189"/>
    </physiologicalReaction>
</comment>
<comment type="pathway">
    <text evidence="10">Siderophore biosynthesis.</text>
</comment>
<comment type="similarity">
    <text evidence="9">Belongs to the thiolase-like superfamily. HMG-CoA synthase family.</text>
</comment>
<accession>F9X3D9</accession>
<protein>
    <recommendedName>
        <fullName evidence="8">Hydroxymethylglutaryl-CoA synthase MYCGRDRAFT_54740</fullName>
        <shortName evidence="8">HMG-CoA synthase MYCGRDRAFT_54740</shortName>
        <ecNumber evidence="10">2.3.3.10</ecNumber>
    </recommendedName>
    <alternativeName>
        <fullName evidence="7">3-hydroxy-3-methylglutaryl coenzyme A synthase MYCGRDRAFT_54740</fullName>
    </alternativeName>
    <alternativeName>
        <fullName evidence="8">Ferrichrome A-like siderophore biosynthesis protein MYCGRDRAFT_54740</fullName>
    </alternativeName>
</protein>
<sequence>MAARPNNIGIKAIELYFPSQCVDQAELEKFDGVSAGKYTIGLGQTRMSFCDDREDIYSLTLTTVSSLLRKYNIDPKSIGRLEVGTETLLDKSKSCKTVLMQLFEPCGNTNIEGVDTVNACYGGTNALFNTLNWMESSAWDGRNAIVVAGDIALYKKGNARPTGGAGCVAMLIGPDAPLVIEPGLRGSFVKHAYDFYKADLTSEYPLVDGQYSIKCYTEAVDKCYEAYNGREKTLKSQANGHSNGVDAAQEAPLDRFDYMCFHAPTCKLVSKSYARLLYNDYLADPTNELFKEVPAELKDLSYEASITDKTVEKTFMGLAKKRFAQRVQPSIQVPTMCGNMYCASVYASLVSLISNVSSADFQGKRVGIFSYGSGLASSLFSLKVKGSTEEITKNLNLQERLDARRVVAPEVYDEMCNLREKAHLQKDFKPKGSVDTILPNTYYLTNVDDMFRREYEVKKE</sequence>
<name>HCS1_ZYMTI</name>
<evidence type="ECO:0000250" key="1">
    <source>
        <dbReference type="UniProtKB" id="P54868"/>
    </source>
</evidence>
<evidence type="ECO:0000250" key="2">
    <source>
        <dbReference type="UniProtKB" id="Q4P3F1"/>
    </source>
</evidence>
<evidence type="ECO:0000250" key="3">
    <source>
        <dbReference type="UniProtKB" id="Q4PEM9"/>
    </source>
</evidence>
<evidence type="ECO:0000250" key="4">
    <source>
        <dbReference type="UniProtKB" id="Q4PEN0"/>
    </source>
</evidence>
<evidence type="ECO:0000250" key="5">
    <source>
        <dbReference type="UniProtKB" id="Q4PEN1"/>
    </source>
</evidence>
<evidence type="ECO:0000255" key="6">
    <source>
        <dbReference type="PROSITE-ProRule" id="PRU10116"/>
    </source>
</evidence>
<evidence type="ECO:0000255" key="7">
    <source>
        <dbReference type="RuleBase" id="RU364071"/>
    </source>
</evidence>
<evidence type="ECO:0000303" key="8">
    <source>
    </source>
</evidence>
<evidence type="ECO:0000305" key="9"/>
<evidence type="ECO:0000305" key="10">
    <source>
    </source>
</evidence>
<proteinExistence type="inferred from homology"/>
<keyword id="KW-1185">Reference proteome</keyword>
<keyword id="KW-0808">Transferase</keyword>
<keyword id="KW-0843">Virulence</keyword>
<feature type="chain" id="PRO_0000451097" description="Hydroxymethylglutaryl-CoA synthase MYCGRDRAFT_54740">
    <location>
        <begin position="1"/>
        <end position="460"/>
    </location>
</feature>
<feature type="active site" description="Proton donor/acceptor" evidence="6">
    <location>
        <position position="86"/>
    </location>
</feature>
<feature type="active site" description="Acyl-thioester intermediate" evidence="6">
    <location>
        <position position="120"/>
    </location>
</feature>
<feature type="active site" description="Proton donor/acceptor" evidence="6">
    <location>
        <position position="262"/>
    </location>
</feature>
<feature type="binding site" evidence="1">
    <location>
        <position position="35"/>
    </location>
    <ligand>
        <name>(3S)-3-hydroxy-3-methylglutaryl-CoA</name>
        <dbReference type="ChEBI" id="CHEBI:43074"/>
    </ligand>
</feature>
<feature type="binding site" evidence="1">
    <location>
        <position position="120"/>
    </location>
    <ligand>
        <name>(3S)-3-hydroxy-3-methylglutaryl-CoA</name>
        <dbReference type="ChEBI" id="CHEBI:43074"/>
    </ligand>
</feature>
<feature type="binding site" evidence="1">
    <location>
        <position position="158"/>
    </location>
    <ligand>
        <name>(3S)-3-hydroxy-3-methylglutaryl-CoA</name>
        <dbReference type="ChEBI" id="CHEBI:43074"/>
    </ligand>
</feature>
<feature type="binding site" evidence="1">
    <location>
        <position position="162"/>
    </location>
    <ligand>
        <name>(3S)-3-hydroxy-3-methylglutaryl-CoA</name>
        <dbReference type="ChEBI" id="CHEBI:43074"/>
    </ligand>
</feature>
<feature type="binding site" evidence="1">
    <location>
        <position position="212"/>
    </location>
    <ligand>
        <name>(3S)-3-hydroxy-3-methylglutaryl-CoA</name>
        <dbReference type="ChEBI" id="CHEBI:43074"/>
    </ligand>
</feature>
<feature type="binding site" evidence="1">
    <location>
        <position position="262"/>
    </location>
    <ligand>
        <name>(3S)-3-hydroxy-3-methylglutaryl-CoA</name>
        <dbReference type="ChEBI" id="CHEBI:43074"/>
    </ligand>
</feature>
<feature type="binding site" evidence="1">
    <location>
        <position position="271"/>
    </location>
    <ligand>
        <name>(3S)-3-hydroxy-3-methylglutaryl-CoA</name>
        <dbReference type="ChEBI" id="CHEBI:43074"/>
    </ligand>
</feature>
<feature type="binding site" evidence="1">
    <location>
        <position position="339"/>
    </location>
    <ligand>
        <name>(3S)-3-hydroxy-3-methylglutaryl-CoA</name>
        <dbReference type="ChEBI" id="CHEBI:43074"/>
    </ligand>
</feature>
<feature type="binding site" evidence="1">
    <location>
        <position position="373"/>
    </location>
    <ligand>
        <name>(3S)-3-hydroxy-3-methylglutaryl-CoA</name>
        <dbReference type="ChEBI" id="CHEBI:43074"/>
    </ligand>
</feature>
<organism>
    <name type="scientific">Zymoseptoria tritici (strain CBS 115943 / IPO323)</name>
    <name type="common">Speckled leaf blotch fungus</name>
    <name type="synonym">Septoria tritici</name>
    <dbReference type="NCBI Taxonomy" id="336722"/>
    <lineage>
        <taxon>Eukaryota</taxon>
        <taxon>Fungi</taxon>
        <taxon>Dikarya</taxon>
        <taxon>Ascomycota</taxon>
        <taxon>Pezizomycotina</taxon>
        <taxon>Dothideomycetes</taxon>
        <taxon>Dothideomycetidae</taxon>
        <taxon>Mycosphaerellales</taxon>
        <taxon>Mycosphaerellaceae</taxon>
        <taxon>Zymoseptoria</taxon>
    </lineage>
</organism>
<reference key="1">
    <citation type="journal article" date="2011" name="PLoS Genet.">
        <title>Finished genome of the fungal wheat pathogen Mycosphaerella graminicola reveals dispensome structure, chromosome plasticity, and stealth pathogenesis.</title>
        <authorList>
            <person name="Goodwin S.B."/>
            <person name="Ben M'barek S."/>
            <person name="Dhillon B."/>
            <person name="Wittenberg A.H.J."/>
            <person name="Crane C.F."/>
            <person name="Hane J.K."/>
            <person name="Foster A.J."/>
            <person name="Van der Lee T.A.J."/>
            <person name="Grimwood J."/>
            <person name="Aerts A."/>
            <person name="Antoniw J."/>
            <person name="Bailey A."/>
            <person name="Bluhm B."/>
            <person name="Bowler J."/>
            <person name="Bristow J."/>
            <person name="van der Burgt A."/>
            <person name="Canto-Canche B."/>
            <person name="Churchill A.C.L."/>
            <person name="Conde-Ferraez L."/>
            <person name="Cools H.J."/>
            <person name="Coutinho P.M."/>
            <person name="Csukai M."/>
            <person name="Dehal P."/>
            <person name="De Wit P."/>
            <person name="Donzelli B."/>
            <person name="van de Geest H.C."/>
            <person name="van Ham R.C.H.J."/>
            <person name="Hammond-Kosack K.E."/>
            <person name="Henrissat B."/>
            <person name="Kilian A."/>
            <person name="Kobayashi A.K."/>
            <person name="Koopmann E."/>
            <person name="Kourmpetis Y."/>
            <person name="Kuzniar A."/>
            <person name="Lindquist E."/>
            <person name="Lombard V."/>
            <person name="Maliepaard C."/>
            <person name="Martins N."/>
            <person name="Mehrabi R."/>
            <person name="Nap J.P.H."/>
            <person name="Ponomarenko A."/>
            <person name="Rudd J.J."/>
            <person name="Salamov A."/>
            <person name="Schmutz J."/>
            <person name="Schouten H.J."/>
            <person name="Shapiro H."/>
            <person name="Stergiopoulos I."/>
            <person name="Torriani S.F.F."/>
            <person name="Tu H."/>
            <person name="de Vries R.P."/>
            <person name="Waalwijk C."/>
            <person name="Ware S.B."/>
            <person name="Wiebenga A."/>
            <person name="Zwiers L.-H."/>
            <person name="Oliver R.P."/>
            <person name="Grigoriev I.V."/>
            <person name="Kema G.H.J."/>
        </authorList>
    </citation>
    <scope>NUCLEOTIDE SEQUENCE [LARGE SCALE GENOMIC DNA]</scope>
    <source>
        <strain>CBS 115943 / IPO323</strain>
    </source>
</reference>
<reference key="2">
    <citation type="journal article" date="2017" name="BMC Genomics">
        <title>In silico prediction and characterization of secondary metabolite biosynthetic gene clusters in the wheat pathogen Zymoseptoria tritici.</title>
        <authorList>
            <person name="Cairns T."/>
            <person name="Meyer V."/>
        </authorList>
    </citation>
    <scope>FUNCTION</scope>
    <scope>PATHWAY</scope>
</reference>
<dbReference type="EC" id="2.3.3.10" evidence="10"/>
<dbReference type="EMBL" id="CM001197">
    <property type="protein sequence ID" value="EGP90734.1"/>
    <property type="molecule type" value="Genomic_DNA"/>
</dbReference>
<dbReference type="RefSeq" id="XP_003855758.1">
    <property type="nucleotide sequence ID" value="XM_003855710.1"/>
</dbReference>
<dbReference type="SMR" id="F9X3D9"/>
<dbReference type="FunCoup" id="F9X3D9">
    <property type="interactions" value="643"/>
</dbReference>
<dbReference type="STRING" id="336722.F9X3D9"/>
<dbReference type="EnsemblFungi" id="Mycgr3T54740">
    <property type="protein sequence ID" value="Mycgr3P54740"/>
    <property type="gene ID" value="Mycgr3G54740"/>
</dbReference>
<dbReference type="GeneID" id="13403698"/>
<dbReference type="KEGG" id="ztr:MYCGRDRAFT_54740"/>
<dbReference type="VEuPathDB" id="FungiDB:ZTRI_2.154"/>
<dbReference type="eggNOG" id="KOG1393">
    <property type="taxonomic scope" value="Eukaryota"/>
</dbReference>
<dbReference type="HOGENOM" id="CLU_008065_0_1_1"/>
<dbReference type="InParanoid" id="F9X3D9"/>
<dbReference type="OMA" id="DDAYNWI"/>
<dbReference type="OrthoDB" id="1269963at2759"/>
<dbReference type="Proteomes" id="UP000008062">
    <property type="component" value="Chromosome 2"/>
</dbReference>
<dbReference type="GO" id="GO:0004421">
    <property type="term" value="F:hydroxymethylglutaryl-CoA synthase activity"/>
    <property type="evidence" value="ECO:0007669"/>
    <property type="project" value="UniProtKB-EC"/>
</dbReference>
<dbReference type="GO" id="GO:0006084">
    <property type="term" value="P:acetyl-CoA metabolic process"/>
    <property type="evidence" value="ECO:0007669"/>
    <property type="project" value="InterPro"/>
</dbReference>
<dbReference type="GO" id="GO:0006696">
    <property type="term" value="P:ergosterol biosynthetic process"/>
    <property type="evidence" value="ECO:0007669"/>
    <property type="project" value="TreeGrafter"/>
</dbReference>
<dbReference type="GO" id="GO:0010142">
    <property type="term" value="P:farnesyl diphosphate biosynthetic process, mevalonate pathway"/>
    <property type="evidence" value="ECO:0007669"/>
    <property type="project" value="InterPro"/>
</dbReference>
<dbReference type="CDD" id="cd00827">
    <property type="entry name" value="init_cond_enzymes"/>
    <property type="match status" value="1"/>
</dbReference>
<dbReference type="FunFam" id="3.40.47.10:FF:000008">
    <property type="entry name" value="3-hydroxy-3-methylglutaryl coenzyme A synthase"/>
    <property type="match status" value="1"/>
</dbReference>
<dbReference type="Gene3D" id="3.40.47.10">
    <property type="match status" value="1"/>
</dbReference>
<dbReference type="InterPro" id="IPR000590">
    <property type="entry name" value="HMG_CoA_synt_AS"/>
</dbReference>
<dbReference type="InterPro" id="IPR013746">
    <property type="entry name" value="HMG_CoA_synt_C_dom"/>
</dbReference>
<dbReference type="InterPro" id="IPR013528">
    <property type="entry name" value="HMG_CoA_synth_N"/>
</dbReference>
<dbReference type="InterPro" id="IPR010122">
    <property type="entry name" value="HMG_CoA_synthase_euk"/>
</dbReference>
<dbReference type="InterPro" id="IPR016039">
    <property type="entry name" value="Thiolase-like"/>
</dbReference>
<dbReference type="NCBIfam" id="TIGR01833">
    <property type="entry name" value="HMG-CoA-S_euk"/>
    <property type="match status" value="1"/>
</dbReference>
<dbReference type="PANTHER" id="PTHR43323">
    <property type="entry name" value="3-HYDROXY-3-METHYLGLUTARYL COENZYME A SYNTHASE"/>
    <property type="match status" value="1"/>
</dbReference>
<dbReference type="PANTHER" id="PTHR43323:SF2">
    <property type="entry name" value="HYDROXYMETHYLGLUTARYL-COA SYNTHASE"/>
    <property type="match status" value="1"/>
</dbReference>
<dbReference type="Pfam" id="PF08540">
    <property type="entry name" value="HMG_CoA_synt_C"/>
    <property type="match status" value="1"/>
</dbReference>
<dbReference type="Pfam" id="PF01154">
    <property type="entry name" value="HMG_CoA_synt_N"/>
    <property type="match status" value="1"/>
</dbReference>
<dbReference type="SUPFAM" id="SSF53901">
    <property type="entry name" value="Thiolase-like"/>
    <property type="match status" value="2"/>
</dbReference>
<dbReference type="PROSITE" id="PS01226">
    <property type="entry name" value="HMG_COA_SYNTHASE"/>
    <property type="match status" value="1"/>
</dbReference>